<dbReference type="EC" id="3.6.1.23" evidence="1"/>
<dbReference type="EMBL" id="CP001138">
    <property type="protein sequence ID" value="ACH52728.1"/>
    <property type="molecule type" value="Genomic_DNA"/>
</dbReference>
<dbReference type="RefSeq" id="WP_000976078.1">
    <property type="nucleotide sequence ID" value="NC_011149.1"/>
</dbReference>
<dbReference type="SMR" id="B5EXE4"/>
<dbReference type="KEGG" id="sea:SeAg_B3948"/>
<dbReference type="HOGENOM" id="CLU_068508_1_1_6"/>
<dbReference type="UniPathway" id="UPA00610">
    <property type="reaction ID" value="UER00666"/>
</dbReference>
<dbReference type="Proteomes" id="UP000008819">
    <property type="component" value="Chromosome"/>
</dbReference>
<dbReference type="GO" id="GO:0004170">
    <property type="term" value="F:dUTP diphosphatase activity"/>
    <property type="evidence" value="ECO:0007669"/>
    <property type="project" value="UniProtKB-UniRule"/>
</dbReference>
<dbReference type="GO" id="GO:0000287">
    <property type="term" value="F:magnesium ion binding"/>
    <property type="evidence" value="ECO:0007669"/>
    <property type="project" value="UniProtKB-UniRule"/>
</dbReference>
<dbReference type="GO" id="GO:0006226">
    <property type="term" value="P:dUMP biosynthetic process"/>
    <property type="evidence" value="ECO:0007669"/>
    <property type="project" value="UniProtKB-UniRule"/>
</dbReference>
<dbReference type="GO" id="GO:0046081">
    <property type="term" value="P:dUTP catabolic process"/>
    <property type="evidence" value="ECO:0007669"/>
    <property type="project" value="InterPro"/>
</dbReference>
<dbReference type="CDD" id="cd07557">
    <property type="entry name" value="trimeric_dUTPase"/>
    <property type="match status" value="1"/>
</dbReference>
<dbReference type="FunFam" id="2.70.40.10:FF:000002">
    <property type="entry name" value="dUTP diphosphatase"/>
    <property type="match status" value="1"/>
</dbReference>
<dbReference type="Gene3D" id="2.70.40.10">
    <property type="match status" value="1"/>
</dbReference>
<dbReference type="HAMAP" id="MF_00116">
    <property type="entry name" value="dUTPase_bact"/>
    <property type="match status" value="1"/>
</dbReference>
<dbReference type="InterPro" id="IPR008181">
    <property type="entry name" value="dUTPase"/>
</dbReference>
<dbReference type="InterPro" id="IPR029054">
    <property type="entry name" value="dUTPase-like"/>
</dbReference>
<dbReference type="InterPro" id="IPR036157">
    <property type="entry name" value="dUTPase-like_sf"/>
</dbReference>
<dbReference type="InterPro" id="IPR033704">
    <property type="entry name" value="dUTPase_trimeric"/>
</dbReference>
<dbReference type="NCBIfam" id="TIGR00576">
    <property type="entry name" value="dut"/>
    <property type="match status" value="1"/>
</dbReference>
<dbReference type="NCBIfam" id="NF001862">
    <property type="entry name" value="PRK00601.1"/>
    <property type="match status" value="1"/>
</dbReference>
<dbReference type="PANTHER" id="PTHR11241">
    <property type="entry name" value="DEOXYURIDINE 5'-TRIPHOSPHATE NUCLEOTIDOHYDROLASE"/>
    <property type="match status" value="1"/>
</dbReference>
<dbReference type="PANTHER" id="PTHR11241:SF0">
    <property type="entry name" value="DEOXYURIDINE 5'-TRIPHOSPHATE NUCLEOTIDOHYDROLASE"/>
    <property type="match status" value="1"/>
</dbReference>
<dbReference type="Pfam" id="PF00692">
    <property type="entry name" value="dUTPase"/>
    <property type="match status" value="1"/>
</dbReference>
<dbReference type="SUPFAM" id="SSF51283">
    <property type="entry name" value="dUTPase-like"/>
    <property type="match status" value="1"/>
</dbReference>
<reference key="1">
    <citation type="journal article" date="2011" name="J. Bacteriol.">
        <title>Comparative genomics of 28 Salmonella enterica isolates: evidence for CRISPR-mediated adaptive sublineage evolution.</title>
        <authorList>
            <person name="Fricke W.F."/>
            <person name="Mammel M.K."/>
            <person name="McDermott P.F."/>
            <person name="Tartera C."/>
            <person name="White D.G."/>
            <person name="Leclerc J.E."/>
            <person name="Ravel J."/>
            <person name="Cebula T.A."/>
        </authorList>
    </citation>
    <scope>NUCLEOTIDE SEQUENCE [LARGE SCALE GENOMIC DNA]</scope>
    <source>
        <strain>SL483</strain>
    </source>
</reference>
<sequence length="152" mass="16168">MMKKIDVKILDPRVGQQFPLPTYATSGSAGLDLRACLDDAVELAPGATTLVPTGLAIHIADPSLAAVMLPRSGLGHKHGIVLGNLVGLIDSDYQGQLMVSIWNRGQDSFTIEPGERIAQMVFVPVVQAEFNLVEAFDATERGEGGFGHSGRK</sequence>
<evidence type="ECO:0000255" key="1">
    <source>
        <dbReference type="HAMAP-Rule" id="MF_00116"/>
    </source>
</evidence>
<keyword id="KW-0378">Hydrolase</keyword>
<keyword id="KW-0460">Magnesium</keyword>
<keyword id="KW-0479">Metal-binding</keyword>
<keyword id="KW-0546">Nucleotide metabolism</keyword>
<proteinExistence type="inferred from homology"/>
<protein>
    <recommendedName>
        <fullName evidence="1">Deoxyuridine 5'-triphosphate nucleotidohydrolase</fullName>
        <shortName evidence="1">dUTPase</shortName>
        <ecNumber evidence="1">3.6.1.23</ecNumber>
    </recommendedName>
    <alternativeName>
        <fullName evidence="1">dUTP pyrophosphatase</fullName>
    </alternativeName>
</protein>
<accession>B5EXE4</accession>
<organism>
    <name type="scientific">Salmonella agona (strain SL483)</name>
    <dbReference type="NCBI Taxonomy" id="454166"/>
    <lineage>
        <taxon>Bacteria</taxon>
        <taxon>Pseudomonadati</taxon>
        <taxon>Pseudomonadota</taxon>
        <taxon>Gammaproteobacteria</taxon>
        <taxon>Enterobacterales</taxon>
        <taxon>Enterobacteriaceae</taxon>
        <taxon>Salmonella</taxon>
    </lineage>
</organism>
<name>DUT_SALA4</name>
<gene>
    <name evidence="1" type="primary">dut</name>
    <name type="ordered locus">SeAg_B3948</name>
</gene>
<comment type="function">
    <text evidence="1">This enzyme is involved in nucleotide metabolism: it produces dUMP, the immediate precursor of thymidine nucleotides and it decreases the intracellular concentration of dUTP so that uracil cannot be incorporated into DNA.</text>
</comment>
<comment type="catalytic activity">
    <reaction evidence="1">
        <text>dUTP + H2O = dUMP + diphosphate + H(+)</text>
        <dbReference type="Rhea" id="RHEA:10248"/>
        <dbReference type="ChEBI" id="CHEBI:15377"/>
        <dbReference type="ChEBI" id="CHEBI:15378"/>
        <dbReference type="ChEBI" id="CHEBI:33019"/>
        <dbReference type="ChEBI" id="CHEBI:61555"/>
        <dbReference type="ChEBI" id="CHEBI:246422"/>
        <dbReference type="EC" id="3.6.1.23"/>
    </reaction>
</comment>
<comment type="cofactor">
    <cofactor evidence="1">
        <name>Mg(2+)</name>
        <dbReference type="ChEBI" id="CHEBI:18420"/>
    </cofactor>
</comment>
<comment type="pathway">
    <text evidence="1">Pyrimidine metabolism; dUMP biosynthesis; dUMP from dCTP (dUTP route): step 2/2.</text>
</comment>
<comment type="similarity">
    <text evidence="1">Belongs to the dUTPase family.</text>
</comment>
<feature type="chain" id="PRO_1000094986" description="Deoxyuridine 5'-triphosphate nucleotidohydrolase">
    <location>
        <begin position="1"/>
        <end position="152"/>
    </location>
</feature>
<feature type="binding site" evidence="1">
    <location>
        <begin position="71"/>
        <end position="73"/>
    </location>
    <ligand>
        <name>substrate</name>
    </ligand>
</feature>
<feature type="binding site" evidence="1">
    <location>
        <position position="84"/>
    </location>
    <ligand>
        <name>substrate</name>
    </ligand>
</feature>
<feature type="binding site" evidence="1">
    <location>
        <begin position="88"/>
        <end position="90"/>
    </location>
    <ligand>
        <name>substrate</name>
    </ligand>
</feature>
<feature type="binding site" evidence="1">
    <location>
        <position position="98"/>
    </location>
    <ligand>
        <name>substrate</name>
    </ligand>
</feature>